<accession>B3EBZ4</accession>
<protein>
    <recommendedName>
        <fullName evidence="4">High-potential iron-sulfur protein</fullName>
        <shortName evidence="4">HiPIP</shortName>
    </recommendedName>
</protein>
<name>HIP_THIVI</name>
<feature type="chain" id="PRO_0000415400" description="High-potential iron-sulfur protein">
    <location>
        <begin position="1"/>
        <end position="83"/>
    </location>
</feature>
<feature type="binding site" evidence="1 3">
    <location>
        <position position="43"/>
    </location>
    <ligand>
        <name>[4Fe-4S] cluster</name>
        <dbReference type="ChEBI" id="CHEBI:49883"/>
    </ligand>
</feature>
<feature type="binding site" evidence="1 3">
    <location>
        <position position="46"/>
    </location>
    <ligand>
        <name>[4Fe-4S] cluster</name>
        <dbReference type="ChEBI" id="CHEBI:49883"/>
    </ligand>
</feature>
<feature type="binding site" evidence="1 3">
    <location>
        <position position="61"/>
    </location>
    <ligand>
        <name>[4Fe-4S] cluster</name>
        <dbReference type="ChEBI" id="CHEBI:49883"/>
    </ligand>
</feature>
<feature type="binding site" evidence="1 3">
    <location>
        <position position="75"/>
    </location>
    <ligand>
        <name>[4Fe-4S] cluster</name>
        <dbReference type="ChEBI" id="CHEBI:49883"/>
    </ligand>
</feature>
<proteinExistence type="evidence at protein level"/>
<sequence>EAPANAVTMDDPTAQALKYHPSAADSDRVAAARPGLPPEEQHCANCNFMQADVGEGDYKGCQLFPGKLINVNGWCASWTLKAG</sequence>
<reference evidence="5" key="1">
    <citation type="journal article" date="2003" name="J. Mol. Evol.">
        <title>Amino acid sequences and distribution of high-potential iron-sulfur proteins that donate electrons to the photosynthetic reaction center in phototropic proteobacteria.</title>
        <authorList>
            <person name="Van Driessche G."/>
            <person name="Vandenberghe I."/>
            <person name="Devreese B."/>
            <person name="Samyn B."/>
            <person name="Meyer T.E."/>
            <person name="Leigh R."/>
            <person name="Cusanovich M.A."/>
            <person name="Bartsch R.G."/>
            <person name="Fischer U."/>
            <person name="Van Beeumen J.J."/>
        </authorList>
    </citation>
    <scope>PROTEIN SEQUENCE</scope>
</reference>
<keyword id="KW-0004">4Fe-4S</keyword>
<keyword id="KW-0903">Direct protein sequencing</keyword>
<keyword id="KW-0249">Electron transport</keyword>
<keyword id="KW-0408">Iron</keyword>
<keyword id="KW-0411">Iron-sulfur</keyword>
<keyword id="KW-0479">Metal-binding</keyword>
<keyword id="KW-0574">Periplasm</keyword>
<keyword id="KW-0813">Transport</keyword>
<organism>
    <name type="scientific">Thiocystis violacea</name>
    <dbReference type="NCBI Taxonomy" id="13725"/>
    <lineage>
        <taxon>Bacteria</taxon>
        <taxon>Pseudomonadati</taxon>
        <taxon>Pseudomonadota</taxon>
        <taxon>Gammaproteobacteria</taxon>
        <taxon>Chromatiales</taxon>
        <taxon>Chromatiaceae</taxon>
        <taxon>Thiocystis</taxon>
    </lineage>
</organism>
<evidence type="ECO:0000250" key="1">
    <source>
        <dbReference type="UniProtKB" id="P00260"/>
    </source>
</evidence>
<evidence type="ECO:0000250" key="2">
    <source>
        <dbReference type="UniProtKB" id="P59860"/>
    </source>
</evidence>
<evidence type="ECO:0000255" key="3">
    <source>
        <dbReference type="PROSITE-ProRule" id="PRU00705"/>
    </source>
</evidence>
<evidence type="ECO:0000303" key="4">
    <source>
    </source>
</evidence>
<evidence type="ECO:0000305" key="5"/>
<comment type="function">
    <text evidence="1 3">Specific class of high-redox-potential 4Fe-4S ferredoxins. Functions in anaerobic electron transport in most purple and in some other photosynthetic bacteria and in at least one genus (Paracoccus) of halophilic, denitrifying bacteria.</text>
</comment>
<comment type="subunit">
    <text evidence="2">Homodimer.</text>
</comment>
<comment type="subcellular location">
    <subcellularLocation>
        <location evidence="1 3">Periplasm</location>
    </subcellularLocation>
</comment>
<comment type="similarity">
    <text evidence="3">Belongs to the high-potential iron-sulfur protein (HiPIP) family.</text>
</comment>
<dbReference type="SMR" id="B3EBZ4"/>
<dbReference type="GO" id="GO:0042597">
    <property type="term" value="C:periplasmic space"/>
    <property type="evidence" value="ECO:0007669"/>
    <property type="project" value="UniProtKB-SubCell"/>
</dbReference>
<dbReference type="GO" id="GO:0051539">
    <property type="term" value="F:4 iron, 4 sulfur cluster binding"/>
    <property type="evidence" value="ECO:0007669"/>
    <property type="project" value="UniProtKB-KW"/>
</dbReference>
<dbReference type="GO" id="GO:0009055">
    <property type="term" value="F:electron transfer activity"/>
    <property type="evidence" value="ECO:0007669"/>
    <property type="project" value="InterPro"/>
</dbReference>
<dbReference type="GO" id="GO:0046872">
    <property type="term" value="F:metal ion binding"/>
    <property type="evidence" value="ECO:0007669"/>
    <property type="project" value="UniProtKB-KW"/>
</dbReference>
<dbReference type="GO" id="GO:0019646">
    <property type="term" value="P:aerobic electron transport chain"/>
    <property type="evidence" value="ECO:0007669"/>
    <property type="project" value="InterPro"/>
</dbReference>
<dbReference type="Gene3D" id="4.10.490.10">
    <property type="entry name" value="High potential iron-sulphur protein"/>
    <property type="match status" value="1"/>
</dbReference>
<dbReference type="InterPro" id="IPR000170">
    <property type="entry name" value="High_potential_FeS_prot"/>
</dbReference>
<dbReference type="InterPro" id="IPR036369">
    <property type="entry name" value="HIPIP_sf"/>
</dbReference>
<dbReference type="Pfam" id="PF01355">
    <property type="entry name" value="HIPIP"/>
    <property type="match status" value="1"/>
</dbReference>
<dbReference type="SUPFAM" id="SSF57652">
    <property type="entry name" value="HIPIP (high potential iron protein)"/>
    <property type="match status" value="1"/>
</dbReference>
<dbReference type="PROSITE" id="PS51373">
    <property type="entry name" value="HIPIP"/>
    <property type="match status" value="1"/>
</dbReference>